<feature type="chain" id="PRO_1000185426" description="UPF0358 protein BBR47_22520">
    <location>
        <begin position="1"/>
        <end position="93"/>
    </location>
</feature>
<comment type="similarity">
    <text evidence="1">Belongs to the UPF0358 family.</text>
</comment>
<evidence type="ECO:0000255" key="1">
    <source>
        <dbReference type="HAMAP-Rule" id="MF_01560"/>
    </source>
</evidence>
<organism>
    <name type="scientific">Brevibacillus brevis (strain 47 / JCM 6285 / NBRC 100599)</name>
    <dbReference type="NCBI Taxonomy" id="358681"/>
    <lineage>
        <taxon>Bacteria</taxon>
        <taxon>Bacillati</taxon>
        <taxon>Bacillota</taxon>
        <taxon>Bacilli</taxon>
        <taxon>Bacillales</taxon>
        <taxon>Paenibacillaceae</taxon>
        <taxon>Brevibacillus</taxon>
    </lineage>
</organism>
<sequence length="93" mass="10733">MTEIKVPDLEQKALALLQADADKIYKLIDVQMENLTMPQCPLYEEVLDTQMFGLSREVEYAVRLGLISDDIGREIMGSLERKLAHLHELFNQR</sequence>
<reference key="1">
    <citation type="submission" date="2005-03" db="EMBL/GenBank/DDBJ databases">
        <title>Brevibacillus brevis strain 47, complete genome.</title>
        <authorList>
            <person name="Hosoyama A."/>
            <person name="Yamada R."/>
            <person name="Hongo Y."/>
            <person name="Terui Y."/>
            <person name="Ankai A."/>
            <person name="Masuyama W."/>
            <person name="Sekiguchi M."/>
            <person name="Takeda T."/>
            <person name="Asano K."/>
            <person name="Ohji S."/>
            <person name="Ichikawa N."/>
            <person name="Narita S."/>
            <person name="Aoki N."/>
            <person name="Miura H."/>
            <person name="Matsushita S."/>
            <person name="Sekigawa T."/>
            <person name="Yamagata H."/>
            <person name="Yoshikawa H."/>
            <person name="Udaka S."/>
            <person name="Tanikawa S."/>
            <person name="Fujita N."/>
        </authorList>
    </citation>
    <scope>NUCLEOTIDE SEQUENCE [LARGE SCALE GENOMIC DNA]</scope>
    <source>
        <strain>47 / JCM 6285 / NBRC 100599</strain>
    </source>
</reference>
<gene>
    <name type="ordered locus">BBR47_22520</name>
</gene>
<dbReference type="EMBL" id="AP008955">
    <property type="protein sequence ID" value="BAH43229.1"/>
    <property type="molecule type" value="Genomic_DNA"/>
</dbReference>
<dbReference type="RefSeq" id="WP_012685955.1">
    <property type="nucleotide sequence ID" value="NC_012491.1"/>
</dbReference>
<dbReference type="SMR" id="C0ZBS0"/>
<dbReference type="STRING" id="358681.BBR47_22520"/>
<dbReference type="KEGG" id="bbe:BBR47_22520"/>
<dbReference type="eggNOG" id="COG4838">
    <property type="taxonomic scope" value="Bacteria"/>
</dbReference>
<dbReference type="HOGENOM" id="CLU_160493_1_0_9"/>
<dbReference type="Proteomes" id="UP000001877">
    <property type="component" value="Chromosome"/>
</dbReference>
<dbReference type="Gene3D" id="1.10.287.750">
    <property type="entry name" value="SO2669-like"/>
    <property type="match status" value="1"/>
</dbReference>
<dbReference type="HAMAP" id="MF_01560">
    <property type="entry name" value="UPF0358"/>
    <property type="match status" value="1"/>
</dbReference>
<dbReference type="InterPro" id="IPR009983">
    <property type="entry name" value="UPF0358"/>
</dbReference>
<dbReference type="InterPro" id="IPR036270">
    <property type="entry name" value="UPF0358_sf"/>
</dbReference>
<dbReference type="NCBIfam" id="NF010187">
    <property type="entry name" value="PRK13666.1"/>
    <property type="match status" value="1"/>
</dbReference>
<dbReference type="Pfam" id="PF07408">
    <property type="entry name" value="DUF1507"/>
    <property type="match status" value="1"/>
</dbReference>
<dbReference type="SUPFAM" id="SSF140404">
    <property type="entry name" value="EF2458-like"/>
    <property type="match status" value="1"/>
</dbReference>
<accession>C0ZBS0</accession>
<name>Y2252_BREBN</name>
<proteinExistence type="inferred from homology"/>
<protein>
    <recommendedName>
        <fullName evidence="1">UPF0358 protein BBR47_22520</fullName>
    </recommendedName>
</protein>
<keyword id="KW-1185">Reference proteome</keyword>